<feature type="chain" id="PRO_0000229810" description="Phosphoribosyl-AMP cyclohydrolase">
    <location>
        <begin position="1"/>
        <end position="101"/>
    </location>
</feature>
<feature type="binding site" evidence="1">
    <location>
        <position position="71"/>
    </location>
    <ligand>
        <name>Mg(2+)</name>
        <dbReference type="ChEBI" id="CHEBI:18420"/>
    </ligand>
</feature>
<feature type="binding site" evidence="1">
    <location>
        <position position="72"/>
    </location>
    <ligand>
        <name>Zn(2+)</name>
        <dbReference type="ChEBI" id="CHEBI:29105"/>
        <note>ligand shared between dimeric partners</note>
    </ligand>
</feature>
<feature type="binding site" evidence="1">
    <location>
        <position position="73"/>
    </location>
    <ligand>
        <name>Mg(2+)</name>
        <dbReference type="ChEBI" id="CHEBI:18420"/>
    </ligand>
</feature>
<feature type="binding site" evidence="1">
    <location>
        <position position="75"/>
    </location>
    <ligand>
        <name>Mg(2+)</name>
        <dbReference type="ChEBI" id="CHEBI:18420"/>
    </ligand>
</feature>
<feature type="binding site" evidence="1">
    <location>
        <position position="88"/>
    </location>
    <ligand>
        <name>Zn(2+)</name>
        <dbReference type="ChEBI" id="CHEBI:29105"/>
        <note>ligand shared between dimeric partners</note>
    </ligand>
</feature>
<feature type="binding site" evidence="1">
    <location>
        <position position="95"/>
    </location>
    <ligand>
        <name>Zn(2+)</name>
        <dbReference type="ChEBI" id="CHEBI:29105"/>
        <note>ligand shared between dimeric partners</note>
    </ligand>
</feature>
<accession>Q6HLE2</accession>
<evidence type="ECO:0000255" key="1">
    <source>
        <dbReference type="HAMAP-Rule" id="MF_01021"/>
    </source>
</evidence>
<organism>
    <name type="scientific">Bacillus thuringiensis subsp. konkukian (strain 97-27)</name>
    <dbReference type="NCBI Taxonomy" id="281309"/>
    <lineage>
        <taxon>Bacteria</taxon>
        <taxon>Bacillati</taxon>
        <taxon>Bacillota</taxon>
        <taxon>Bacilli</taxon>
        <taxon>Bacillales</taxon>
        <taxon>Bacillaceae</taxon>
        <taxon>Bacillus</taxon>
        <taxon>Bacillus cereus group</taxon>
    </lineage>
</organism>
<gene>
    <name evidence="1" type="primary">hisI</name>
    <name type="ordered locus">BT9727_1295</name>
</gene>
<comment type="function">
    <text evidence="1">Catalyzes the hydrolysis of the adenine ring of phosphoribosyl-AMP.</text>
</comment>
<comment type="catalytic activity">
    <reaction evidence="1">
        <text>1-(5-phospho-beta-D-ribosyl)-5'-AMP + H2O = 1-(5-phospho-beta-D-ribosyl)-5-[(5-phospho-beta-D-ribosylamino)methylideneamino]imidazole-4-carboxamide</text>
        <dbReference type="Rhea" id="RHEA:20049"/>
        <dbReference type="ChEBI" id="CHEBI:15377"/>
        <dbReference type="ChEBI" id="CHEBI:58435"/>
        <dbReference type="ChEBI" id="CHEBI:59457"/>
        <dbReference type="EC" id="3.5.4.19"/>
    </reaction>
</comment>
<comment type="cofactor">
    <cofactor evidence="1">
        <name>Mg(2+)</name>
        <dbReference type="ChEBI" id="CHEBI:18420"/>
    </cofactor>
    <text evidence="1">Binds 1 Mg(2+) ion per subunit.</text>
</comment>
<comment type="cofactor">
    <cofactor evidence="1">
        <name>Zn(2+)</name>
        <dbReference type="ChEBI" id="CHEBI:29105"/>
    </cofactor>
    <text evidence="1">Binds 1 zinc ion per subunit.</text>
</comment>
<comment type="pathway">
    <text evidence="1">Amino-acid biosynthesis; L-histidine biosynthesis; L-histidine from 5-phospho-alpha-D-ribose 1-diphosphate: step 3/9.</text>
</comment>
<comment type="subunit">
    <text evidence="1">Homodimer.</text>
</comment>
<comment type="subcellular location">
    <subcellularLocation>
        <location evidence="1">Cytoplasm</location>
    </subcellularLocation>
</comment>
<comment type="similarity">
    <text evidence="1">Belongs to the PRA-CH family.</text>
</comment>
<proteinExistence type="inferred from homology"/>
<keyword id="KW-0028">Amino-acid biosynthesis</keyword>
<keyword id="KW-0963">Cytoplasm</keyword>
<keyword id="KW-0368">Histidine biosynthesis</keyword>
<keyword id="KW-0378">Hydrolase</keyword>
<keyword id="KW-0460">Magnesium</keyword>
<keyword id="KW-0479">Metal-binding</keyword>
<keyword id="KW-0862">Zinc</keyword>
<protein>
    <recommendedName>
        <fullName evidence="1">Phosphoribosyl-AMP cyclohydrolase</fullName>
        <shortName evidence="1">PRA-CH</shortName>
        <ecNumber evidence="1">3.5.4.19</ecNumber>
    </recommendedName>
</protein>
<sequence>MKPNFSKGLLPAVVIEEGTKEVLMLAYMNEEAYEKTLKTKRTWFYSRSRRSLWNKGETSGHVQHVQSLYLDCDQDAIVVVVKQVGPACHTGEKTCFHYKII</sequence>
<reference key="1">
    <citation type="journal article" date="2006" name="J. Bacteriol.">
        <title>Pathogenomic sequence analysis of Bacillus cereus and Bacillus thuringiensis isolates closely related to Bacillus anthracis.</title>
        <authorList>
            <person name="Han C.S."/>
            <person name="Xie G."/>
            <person name="Challacombe J.F."/>
            <person name="Altherr M.R."/>
            <person name="Bhotika S.S."/>
            <person name="Bruce D."/>
            <person name="Campbell C.S."/>
            <person name="Campbell M.L."/>
            <person name="Chen J."/>
            <person name="Chertkov O."/>
            <person name="Cleland C."/>
            <person name="Dimitrijevic M."/>
            <person name="Doggett N.A."/>
            <person name="Fawcett J.J."/>
            <person name="Glavina T."/>
            <person name="Goodwin L.A."/>
            <person name="Hill K.K."/>
            <person name="Hitchcock P."/>
            <person name="Jackson P.J."/>
            <person name="Keim P."/>
            <person name="Kewalramani A.R."/>
            <person name="Longmire J."/>
            <person name="Lucas S."/>
            <person name="Malfatti S."/>
            <person name="McMurry K."/>
            <person name="Meincke L.J."/>
            <person name="Misra M."/>
            <person name="Moseman B.L."/>
            <person name="Mundt M."/>
            <person name="Munk A.C."/>
            <person name="Okinaka R.T."/>
            <person name="Parson-Quintana B."/>
            <person name="Reilly L.P."/>
            <person name="Richardson P."/>
            <person name="Robinson D.L."/>
            <person name="Rubin E."/>
            <person name="Saunders E."/>
            <person name="Tapia R."/>
            <person name="Tesmer J.G."/>
            <person name="Thayer N."/>
            <person name="Thompson L.S."/>
            <person name="Tice H."/>
            <person name="Ticknor L.O."/>
            <person name="Wills P.L."/>
            <person name="Brettin T.S."/>
            <person name="Gilna P."/>
        </authorList>
    </citation>
    <scope>NUCLEOTIDE SEQUENCE [LARGE SCALE GENOMIC DNA]</scope>
    <source>
        <strain>97-27</strain>
    </source>
</reference>
<name>HIS3_BACHK</name>
<dbReference type="EC" id="3.5.4.19" evidence="1"/>
<dbReference type="EMBL" id="AE017355">
    <property type="protein sequence ID" value="AAT59423.1"/>
    <property type="molecule type" value="Genomic_DNA"/>
</dbReference>
<dbReference type="RefSeq" id="WP_000803979.1">
    <property type="nucleotide sequence ID" value="NC_005957.1"/>
</dbReference>
<dbReference type="RefSeq" id="YP_035629.1">
    <property type="nucleotide sequence ID" value="NC_005957.1"/>
</dbReference>
<dbReference type="SMR" id="Q6HLE2"/>
<dbReference type="KEGG" id="btk:BT9727_1295"/>
<dbReference type="PATRIC" id="fig|281309.8.peg.1364"/>
<dbReference type="HOGENOM" id="CLU_048577_5_3_9"/>
<dbReference type="UniPathway" id="UPA00031">
    <property type="reaction ID" value="UER00008"/>
</dbReference>
<dbReference type="Proteomes" id="UP000001301">
    <property type="component" value="Chromosome"/>
</dbReference>
<dbReference type="GO" id="GO:0005737">
    <property type="term" value="C:cytoplasm"/>
    <property type="evidence" value="ECO:0007669"/>
    <property type="project" value="UniProtKB-SubCell"/>
</dbReference>
<dbReference type="GO" id="GO:0000287">
    <property type="term" value="F:magnesium ion binding"/>
    <property type="evidence" value="ECO:0007669"/>
    <property type="project" value="UniProtKB-UniRule"/>
</dbReference>
<dbReference type="GO" id="GO:0004635">
    <property type="term" value="F:phosphoribosyl-AMP cyclohydrolase activity"/>
    <property type="evidence" value="ECO:0007669"/>
    <property type="project" value="UniProtKB-UniRule"/>
</dbReference>
<dbReference type="GO" id="GO:0008270">
    <property type="term" value="F:zinc ion binding"/>
    <property type="evidence" value="ECO:0007669"/>
    <property type="project" value="UniProtKB-UniRule"/>
</dbReference>
<dbReference type="GO" id="GO:0000105">
    <property type="term" value="P:L-histidine biosynthetic process"/>
    <property type="evidence" value="ECO:0007669"/>
    <property type="project" value="UniProtKB-UniRule"/>
</dbReference>
<dbReference type="FunFam" id="3.10.20.810:FF:000001">
    <property type="entry name" value="Histidine biosynthesis bifunctional protein HisIE"/>
    <property type="match status" value="1"/>
</dbReference>
<dbReference type="Gene3D" id="3.10.20.810">
    <property type="entry name" value="Phosphoribosyl-AMP cyclohydrolase"/>
    <property type="match status" value="1"/>
</dbReference>
<dbReference type="HAMAP" id="MF_01021">
    <property type="entry name" value="HisI"/>
    <property type="match status" value="1"/>
</dbReference>
<dbReference type="InterPro" id="IPR026660">
    <property type="entry name" value="PRA-CH"/>
</dbReference>
<dbReference type="InterPro" id="IPR002496">
    <property type="entry name" value="PRib_AMP_CycHydrolase_dom"/>
</dbReference>
<dbReference type="InterPro" id="IPR038019">
    <property type="entry name" value="PRib_AMP_CycHydrolase_sf"/>
</dbReference>
<dbReference type="NCBIfam" id="NF000768">
    <property type="entry name" value="PRK00051.1"/>
    <property type="match status" value="1"/>
</dbReference>
<dbReference type="PANTHER" id="PTHR42945">
    <property type="entry name" value="HISTIDINE BIOSYNTHESIS BIFUNCTIONAL PROTEIN"/>
    <property type="match status" value="1"/>
</dbReference>
<dbReference type="PANTHER" id="PTHR42945:SF1">
    <property type="entry name" value="HISTIDINE BIOSYNTHESIS BIFUNCTIONAL PROTEIN HIS7"/>
    <property type="match status" value="1"/>
</dbReference>
<dbReference type="Pfam" id="PF01502">
    <property type="entry name" value="PRA-CH"/>
    <property type="match status" value="1"/>
</dbReference>
<dbReference type="SUPFAM" id="SSF141734">
    <property type="entry name" value="HisI-like"/>
    <property type="match status" value="1"/>
</dbReference>